<sequence>MHDPFIAEENDLDLEEKRLQRQLNEIQEKKRLRSAQKEASSENAEVIQVPRSPPQQVRVLTVSSPSKLKSPKRLILGIDKGKTGKDVSLGKGPRGPLPKPFHERLAEARNQERKRSDKLKTMKKNRKQSFQRKRNILEDGKSEEEKFPMKCDEIDPYSRQAIVIRYISDEVAKENIGGNQVYLIHQLLKLVRAPKFEAPEVDNYVVMGIVASNSGTRETVNGNKYCMLTLTDLKWQLECFLFGKAFERYWKIQSGTVIALLNPEVLKPKNPDIGRFSLKLDSEYDVLLEIGRSKHLGYCSSRRKSGELCKHWLDKRAGDVCEYHVDLAVQRSMSTRTEFASSMATMHEPRARREKRFRGQGFQGYFAGEKYSAIPNAVAGLYDAEDAVQTERERKERYKKQRAQAEREREILVRLSKRCCASSSSSSNSNNLSTGMSMRTLGHQYLNLQGSGVKNLHDKGNPTALSKDSEIDSSTKKPSVLASFNASIMNPKSSLPSFSNSAILGTNDAASGTPVPQDTTSTKVSPAVVFTSSPRIFSPQSLRKIGFDPTHSADASTTHSTATGLSRSGSLKNIKFRYEFTESDDEDDLEIVP</sequence>
<protein>
    <recommendedName>
        <fullName>DNA replication licensing factor mcm10</fullName>
    </recommendedName>
    <alternativeName>
        <fullName>Cdc23 protein</fullName>
    </alternativeName>
    <alternativeName>
        <fullName>Minichromosome maintenance protein 10</fullName>
    </alternativeName>
</protein>
<comment type="function">
    <text evidence="3 4 5 6 8">Required for DNA synthesis. Required for entry into or completion of S phase. Involved in DNA replication and seems to participate in the activation of the pre-replication complex (pre-RC) and in transcription elongation. May play a role as key coordinator in assembling the replication fork. Proposed to function at replication origins following the binding of the mcm2-7 complex prior to the recruitment of sna41. Probably is required to stimulate phosphorylation of the mcm2-7 complex by the dfp1-hsk1 kinase complex. May recruit the DNA polymerase alpha:primase complex to replication origins and is required to maintain it on chromatin independently of sna41. May have primase activity. Binds to single-stranded DNA.</text>
</comment>
<comment type="subunit">
    <text evidence="1 3 4 5 7">Self-associates (By similarity). Interacts with mcm2, mcm7, him1/dfp1, hsk1, pol1 and abp1. Associates with the mcm2-7 complex and the dfp1-hsk1 complex.</text>
</comment>
<comment type="interaction">
    <interactant intactId="EBI-1387246">
        <id>O42709</id>
    </interactant>
    <interactant intactId="EBI-908476">
        <id>P50582</id>
        <label>hsk1</label>
    </interactant>
    <organismsDiffer>false</organismsDiffer>
    <experiments>3</experiments>
</comment>
<comment type="interaction">
    <interactant intactId="EBI-1387246">
        <id>O42709</id>
    </interactant>
    <interactant intactId="EBI-913806">
        <id>P29458</id>
        <label>mcm4</label>
    </interactant>
    <organismsDiffer>false</organismsDiffer>
    <experiments>3</experiments>
</comment>
<comment type="subcellular location">
    <subcellularLocation>
        <location evidence="3">Nucleus</location>
    </subcellularLocation>
    <text>Associates with chromatin.</text>
</comment>
<comment type="domain">
    <text evidence="1">The zinc finger-like domain binds a zinc ion and is involved in self-association.</text>
</comment>
<comment type="similarity">
    <text evidence="9">Belongs to the MCM10 family.</text>
</comment>
<reference key="1">
    <citation type="journal article" date="1998" name="Curr. Genet.">
        <title>The essential Schizosaccharomyces pombe cdc23 DNA replication gene shares structural and functional homology with the Saccharomyces cerevisiae DNA43 (MCM10) gene.</title>
        <authorList>
            <person name="Aves S.J."/>
            <person name="Tongue N."/>
            <person name="Foster A.J."/>
            <person name="Hart E.A."/>
        </authorList>
    </citation>
    <scope>NUCLEOTIDE SEQUENCE [GENOMIC DNA]</scope>
    <scope>FUNCTION</scope>
</reference>
<reference key="2">
    <citation type="journal article" date="2000" name="Genes Dev.">
        <title>Mcm10 and the MCM2-7 complex interact to initiate DNA synthesis and to release replication factors from origins.</title>
        <authorList>
            <person name="Homesley L."/>
            <person name="Lei M."/>
            <person name="Kawasaki Y."/>
            <person name="Sawyer S."/>
            <person name="Christensen T."/>
            <person name="Tye B.K."/>
        </authorList>
    </citation>
    <scope>NUCLEOTIDE SEQUENCE [GENOMIC DNA]</scope>
    <scope>FUNCTION</scope>
    <scope>SUBUNIT</scope>
    <scope>SUBCELLULAR LOCATION</scope>
    <source>
        <strain>972 / ATCC 24843</strain>
    </source>
</reference>
<reference key="3">
    <citation type="journal article" date="2002" name="Nature">
        <title>The genome sequence of Schizosaccharomyces pombe.</title>
        <authorList>
            <person name="Wood V."/>
            <person name="Gwilliam R."/>
            <person name="Rajandream M.A."/>
            <person name="Lyne M.H."/>
            <person name="Lyne R."/>
            <person name="Stewart A."/>
            <person name="Sgouros J.G."/>
            <person name="Peat N."/>
            <person name="Hayles J."/>
            <person name="Baker S.G."/>
            <person name="Basham D."/>
            <person name="Bowman S."/>
            <person name="Brooks K."/>
            <person name="Brown D."/>
            <person name="Brown S."/>
            <person name="Chillingworth T."/>
            <person name="Churcher C.M."/>
            <person name="Collins M."/>
            <person name="Connor R."/>
            <person name="Cronin A."/>
            <person name="Davis P."/>
            <person name="Feltwell T."/>
            <person name="Fraser A."/>
            <person name="Gentles S."/>
            <person name="Goble A."/>
            <person name="Hamlin N."/>
            <person name="Harris D.E."/>
            <person name="Hidalgo J."/>
            <person name="Hodgson G."/>
            <person name="Holroyd S."/>
            <person name="Hornsby T."/>
            <person name="Howarth S."/>
            <person name="Huckle E.J."/>
            <person name="Hunt S."/>
            <person name="Jagels K."/>
            <person name="James K.D."/>
            <person name="Jones L."/>
            <person name="Jones M."/>
            <person name="Leather S."/>
            <person name="McDonald S."/>
            <person name="McLean J."/>
            <person name="Mooney P."/>
            <person name="Moule S."/>
            <person name="Mungall K.L."/>
            <person name="Murphy L.D."/>
            <person name="Niblett D."/>
            <person name="Odell C."/>
            <person name="Oliver K."/>
            <person name="O'Neil S."/>
            <person name="Pearson D."/>
            <person name="Quail M.A."/>
            <person name="Rabbinowitsch E."/>
            <person name="Rutherford K.M."/>
            <person name="Rutter S."/>
            <person name="Saunders D."/>
            <person name="Seeger K."/>
            <person name="Sharp S."/>
            <person name="Skelton J."/>
            <person name="Simmonds M.N."/>
            <person name="Squares R."/>
            <person name="Squares S."/>
            <person name="Stevens K."/>
            <person name="Taylor K."/>
            <person name="Taylor R.G."/>
            <person name="Tivey A."/>
            <person name="Walsh S.V."/>
            <person name="Warren T."/>
            <person name="Whitehead S."/>
            <person name="Woodward J.R."/>
            <person name="Volckaert G."/>
            <person name="Aert R."/>
            <person name="Robben J."/>
            <person name="Grymonprez B."/>
            <person name="Weltjens I."/>
            <person name="Vanstreels E."/>
            <person name="Rieger M."/>
            <person name="Schaefer M."/>
            <person name="Mueller-Auer S."/>
            <person name="Gabel C."/>
            <person name="Fuchs M."/>
            <person name="Duesterhoeft A."/>
            <person name="Fritzc C."/>
            <person name="Holzer E."/>
            <person name="Moestl D."/>
            <person name="Hilbert H."/>
            <person name="Borzym K."/>
            <person name="Langer I."/>
            <person name="Beck A."/>
            <person name="Lehrach H."/>
            <person name="Reinhardt R."/>
            <person name="Pohl T.M."/>
            <person name="Eger P."/>
            <person name="Zimmermann W."/>
            <person name="Wedler H."/>
            <person name="Wambutt R."/>
            <person name="Purnelle B."/>
            <person name="Goffeau A."/>
            <person name="Cadieu E."/>
            <person name="Dreano S."/>
            <person name="Gloux S."/>
            <person name="Lelaure V."/>
            <person name="Mottier S."/>
            <person name="Galibert F."/>
            <person name="Aves S.J."/>
            <person name="Xiang Z."/>
            <person name="Hunt C."/>
            <person name="Moore K."/>
            <person name="Hurst S.M."/>
            <person name="Lucas M."/>
            <person name="Rochet M."/>
            <person name="Gaillardin C."/>
            <person name="Tallada V.A."/>
            <person name="Garzon A."/>
            <person name="Thode G."/>
            <person name="Daga R.R."/>
            <person name="Cruzado L."/>
            <person name="Jimenez J."/>
            <person name="Sanchez M."/>
            <person name="del Rey F."/>
            <person name="Benito J."/>
            <person name="Dominguez A."/>
            <person name="Revuelta J.L."/>
            <person name="Moreno S."/>
            <person name="Armstrong J."/>
            <person name="Forsburg S.L."/>
            <person name="Cerutti L."/>
            <person name="Lowe T."/>
            <person name="McCombie W.R."/>
            <person name="Paulsen I."/>
            <person name="Potashkin J."/>
            <person name="Shpakovski G.V."/>
            <person name="Ussery D."/>
            <person name="Barrell B.G."/>
            <person name="Nurse P."/>
        </authorList>
    </citation>
    <scope>NUCLEOTIDE SEQUENCE [LARGE SCALE GENOMIC DNA]</scope>
    <source>
        <strain>972 / ATCC 24843</strain>
    </source>
</reference>
<reference key="4">
    <citation type="journal article" date="2003" name="Proc. Natl. Acad. Sci. U.S.A.">
        <title>The Cdc23 (Mcm10) protein is required for the phosphorylation of minichromosome maintenance complex by the Dfp1-Hsk1 kinase.</title>
        <authorList>
            <person name="Lee J.-K."/>
            <person name="Seo Y.-S."/>
            <person name="Hurwitz J."/>
        </authorList>
    </citation>
    <scope>FUNCTION</scope>
    <scope>INTERACTION WITH HIM1; HSK1; MCM2 AND MCM7</scope>
    <scope>INTERACTION WITH THE MCM2-7 COMPLEX AND THE DFP1-HSK1 COMPLEX</scope>
</reference>
<reference key="5">
    <citation type="journal article" date="2004" name="J. Biol. Chem.">
        <title>Primer utilization by DNA polymerase alpha-primase is influenced by its interaction with Mcm10p.</title>
        <authorList>
            <person name="Fien K."/>
            <person name="Cho Y.-S."/>
            <person name="Lee J.-K."/>
            <person name="Raychaudhuri S."/>
            <person name="Tappin I."/>
            <person name="Hurwitz J."/>
        </authorList>
    </citation>
    <scope>FUNCTION</scope>
    <scope>DNA-BINDING</scope>
    <scope>INTERACTION WITH POL1</scope>
</reference>
<reference key="6">
    <citation type="journal article" date="2006" name="Cell Div.">
        <title>The CENP-B homolog, Abp1, interacts with the initiation protein Cdc23 (MCM10) and is required for efficient DNA replication in fission yeast.</title>
        <authorList>
            <person name="Locovei A.M."/>
            <person name="Spiga M.-G."/>
            <person name="Tanaka K."/>
            <person name="Murakami Y."/>
            <person name="D'Urso G."/>
        </authorList>
    </citation>
    <scope>INTERACTION WITH ABP1</scope>
</reference>
<reference key="7">
    <citation type="journal article" date="2006" name="J. Biol. Chem.">
        <title>Fission yeast Mcm10p contains primase activity.</title>
        <authorList>
            <person name="Fien K."/>
            <person name="Hurwitz J."/>
        </authorList>
    </citation>
    <scope>FUNCTION AS A PRIMASE</scope>
    <scope>MUTAGENESIS OF GLU-586; ASP-587 AND ASP-588</scope>
</reference>
<gene>
    <name type="primary">mcm10</name>
    <name type="synonym">cdc23</name>
    <name type="ORF">SPBC1347.10</name>
</gene>
<keyword id="KW-0131">Cell cycle</keyword>
<keyword id="KW-0132">Cell division</keyword>
<keyword id="KW-0235">DNA replication</keyword>
<keyword id="KW-0238">DNA-binding</keyword>
<keyword id="KW-0479">Metal-binding</keyword>
<keyword id="KW-0539">Nucleus</keyword>
<keyword id="KW-1185">Reference proteome</keyword>
<keyword id="KW-0862">Zinc</keyword>
<keyword id="KW-0863">Zinc-finger</keyword>
<proteinExistence type="evidence at protein level"/>
<feature type="chain" id="PRO_0000096280" description="DNA replication licensing factor mcm10">
    <location>
        <begin position="1"/>
        <end position="593"/>
    </location>
</feature>
<feature type="region of interest" description="Interaction with dfp1-hsk1 complex">
    <location>
        <begin position="1"/>
        <end position="220"/>
    </location>
</feature>
<feature type="region of interest" description="Disordered" evidence="2">
    <location>
        <begin position="29"/>
        <end position="52"/>
    </location>
</feature>
<feature type="region of interest" description="Disordered" evidence="2">
    <location>
        <begin position="82"/>
        <end position="130"/>
    </location>
</feature>
<feature type="region of interest" description="Interaction with mcm complex">
    <location>
        <begin position="211"/>
        <end position="593"/>
    </location>
</feature>
<feature type="region of interest" description="Interaction with dfp1-hsk1 complex">
    <location>
        <begin position="211"/>
        <end position="295"/>
    </location>
</feature>
<feature type="region of interest" description="Zinc finger-like">
    <location>
        <begin position="299"/>
        <end position="324"/>
    </location>
</feature>
<feature type="region of interest" description="Disordered" evidence="2">
    <location>
        <begin position="452"/>
        <end position="476"/>
    </location>
</feature>
<feature type="region of interest" description="Disordered" evidence="2">
    <location>
        <begin position="541"/>
        <end position="567"/>
    </location>
</feature>
<feature type="compositionally biased region" description="Basic and acidic residues" evidence="2">
    <location>
        <begin position="100"/>
        <end position="120"/>
    </location>
</feature>
<feature type="compositionally biased region" description="Basic residues" evidence="2">
    <location>
        <begin position="121"/>
        <end position="130"/>
    </location>
</feature>
<feature type="compositionally biased region" description="Low complexity" evidence="2">
    <location>
        <begin position="550"/>
        <end position="563"/>
    </location>
</feature>
<feature type="mutagenesis site" description="Lethal; no effect on primase activity." evidence="6">
    <original>E</original>
    <variation>A</variation>
    <location>
        <position position="586"/>
    </location>
</feature>
<feature type="mutagenesis site" description="Lethal; lowers primase activity 3-fold." evidence="6">
    <original>D</original>
    <variation>A</variation>
    <location>
        <position position="587"/>
    </location>
</feature>
<feature type="mutagenesis site" description="Lethal; lowers primase activity 15-fold." evidence="6">
    <original>D</original>
    <variation>A</variation>
    <location>
        <position position="588"/>
    </location>
</feature>
<name>MCM10_SCHPO</name>
<accession>O42709</accession>
<dbReference type="EMBL" id="AJ224944">
    <property type="protein sequence ID" value="CAA12235.1"/>
    <property type="molecule type" value="Genomic_DNA"/>
</dbReference>
<dbReference type="EMBL" id="AB011244">
    <property type="protein sequence ID" value="BAA24935.1"/>
    <property type="molecule type" value="Genomic_DNA"/>
</dbReference>
<dbReference type="EMBL" id="CU329671">
    <property type="protein sequence ID" value="CAB37441.1"/>
    <property type="molecule type" value="Genomic_DNA"/>
</dbReference>
<dbReference type="PIR" id="T43323">
    <property type="entry name" value="T43323"/>
</dbReference>
<dbReference type="RefSeq" id="NP_596702.1">
    <property type="nucleotide sequence ID" value="NM_001022626.2"/>
</dbReference>
<dbReference type="SMR" id="O42709"/>
<dbReference type="BioGRID" id="276387">
    <property type="interactions" value="53"/>
</dbReference>
<dbReference type="FunCoup" id="O42709">
    <property type="interactions" value="58"/>
</dbReference>
<dbReference type="IntAct" id="O42709">
    <property type="interactions" value="19"/>
</dbReference>
<dbReference type="MINT" id="O42709"/>
<dbReference type="STRING" id="284812.O42709"/>
<dbReference type="iPTMnet" id="O42709"/>
<dbReference type="SwissPalm" id="O42709"/>
<dbReference type="PaxDb" id="4896-SPBC1347.10.1"/>
<dbReference type="EnsemblFungi" id="SPBC1347.10.1">
    <property type="protein sequence ID" value="SPBC1347.10.1:pep"/>
    <property type="gene ID" value="SPBC1347.10"/>
</dbReference>
<dbReference type="GeneID" id="2539838"/>
<dbReference type="KEGG" id="spo:2539838"/>
<dbReference type="PomBase" id="SPBC1347.10"/>
<dbReference type="VEuPathDB" id="FungiDB:SPBC1347.10"/>
<dbReference type="eggNOG" id="KOG3056">
    <property type="taxonomic scope" value="Eukaryota"/>
</dbReference>
<dbReference type="HOGENOM" id="CLU_426518_0_0_1"/>
<dbReference type="InParanoid" id="O42709"/>
<dbReference type="OMA" id="FRYEFTE"/>
<dbReference type="PhylomeDB" id="O42709"/>
<dbReference type="Reactome" id="R-SPO-176187">
    <property type="pathway name" value="Activation of ATR in response to replication stress"/>
</dbReference>
<dbReference type="Reactome" id="R-SPO-68962">
    <property type="pathway name" value="Activation of the pre-replicative complex"/>
</dbReference>
<dbReference type="PRO" id="PR:O42709"/>
<dbReference type="Proteomes" id="UP000002485">
    <property type="component" value="Chromosome II"/>
</dbReference>
<dbReference type="GO" id="GO:0000785">
    <property type="term" value="C:chromatin"/>
    <property type="evidence" value="ECO:0000314"/>
    <property type="project" value="PomBase"/>
</dbReference>
<dbReference type="GO" id="GO:0043596">
    <property type="term" value="C:nuclear replication fork"/>
    <property type="evidence" value="ECO:0000314"/>
    <property type="project" value="PomBase"/>
</dbReference>
<dbReference type="GO" id="GO:0035861">
    <property type="term" value="C:site of double-strand break"/>
    <property type="evidence" value="ECO:0000314"/>
    <property type="project" value="PomBase"/>
</dbReference>
<dbReference type="GO" id="GO:0003688">
    <property type="term" value="F:DNA replication origin binding"/>
    <property type="evidence" value="ECO:0000318"/>
    <property type="project" value="GO_Central"/>
</dbReference>
<dbReference type="GO" id="GO:0003899">
    <property type="term" value="F:DNA-directed RNA polymerase activity"/>
    <property type="evidence" value="ECO:0000314"/>
    <property type="project" value="PomBase"/>
</dbReference>
<dbReference type="GO" id="GO:1904931">
    <property type="term" value="F:MCM complex binding"/>
    <property type="evidence" value="ECO:0000353"/>
    <property type="project" value="PomBase"/>
</dbReference>
<dbReference type="GO" id="GO:0003697">
    <property type="term" value="F:single-stranded DNA binding"/>
    <property type="evidence" value="ECO:0000269"/>
    <property type="project" value="PomBase"/>
</dbReference>
<dbReference type="GO" id="GO:0008270">
    <property type="term" value="F:zinc ion binding"/>
    <property type="evidence" value="ECO:0007669"/>
    <property type="project" value="UniProtKB-KW"/>
</dbReference>
<dbReference type="GO" id="GO:0051301">
    <property type="term" value="P:cell division"/>
    <property type="evidence" value="ECO:0007669"/>
    <property type="project" value="UniProtKB-KW"/>
</dbReference>
<dbReference type="GO" id="GO:0006270">
    <property type="term" value="P:DNA replication initiation"/>
    <property type="evidence" value="ECO:0000318"/>
    <property type="project" value="GO_Central"/>
</dbReference>
<dbReference type="GO" id="GO:0071515">
    <property type="term" value="P:mating-type locus imprinting"/>
    <property type="evidence" value="ECO:0000315"/>
    <property type="project" value="PomBase"/>
</dbReference>
<dbReference type="GO" id="GO:1902315">
    <property type="term" value="P:nuclear cell cycle DNA replication initiation"/>
    <property type="evidence" value="ECO:0000315"/>
    <property type="project" value="PomBase"/>
</dbReference>
<dbReference type="Gene3D" id="2.40.50.140">
    <property type="entry name" value="Nucleic acid-binding proteins"/>
    <property type="match status" value="1"/>
</dbReference>
<dbReference type="InterPro" id="IPR040184">
    <property type="entry name" value="Mcm10"/>
</dbReference>
<dbReference type="InterPro" id="IPR055065">
    <property type="entry name" value="MCM10_OB"/>
</dbReference>
<dbReference type="InterPro" id="IPR012340">
    <property type="entry name" value="NA-bd_OB-fold"/>
</dbReference>
<dbReference type="InterPro" id="IPR015408">
    <property type="entry name" value="Znf_Mcm10/DnaG"/>
</dbReference>
<dbReference type="PANTHER" id="PTHR13454">
    <property type="entry name" value="PROTEIN MCM10 HOMOLOG"/>
    <property type="match status" value="1"/>
</dbReference>
<dbReference type="PANTHER" id="PTHR13454:SF11">
    <property type="entry name" value="PROTEIN MCM10 HOMOLOG"/>
    <property type="match status" value="1"/>
</dbReference>
<dbReference type="Pfam" id="PF22379">
    <property type="entry name" value="MCM10_OB"/>
    <property type="match status" value="1"/>
</dbReference>
<dbReference type="Pfam" id="PF09329">
    <property type="entry name" value="zf-primase"/>
    <property type="match status" value="1"/>
</dbReference>
<evidence type="ECO:0000250" key="1"/>
<evidence type="ECO:0000256" key="2">
    <source>
        <dbReference type="SAM" id="MobiDB-lite"/>
    </source>
</evidence>
<evidence type="ECO:0000269" key="3">
    <source>
    </source>
</evidence>
<evidence type="ECO:0000269" key="4">
    <source>
    </source>
</evidence>
<evidence type="ECO:0000269" key="5">
    <source>
    </source>
</evidence>
<evidence type="ECO:0000269" key="6">
    <source>
    </source>
</evidence>
<evidence type="ECO:0000269" key="7">
    <source>
    </source>
</evidence>
<evidence type="ECO:0000269" key="8">
    <source>
    </source>
</evidence>
<evidence type="ECO:0000305" key="9"/>
<organism>
    <name type="scientific">Schizosaccharomyces pombe (strain 972 / ATCC 24843)</name>
    <name type="common">Fission yeast</name>
    <dbReference type="NCBI Taxonomy" id="284812"/>
    <lineage>
        <taxon>Eukaryota</taxon>
        <taxon>Fungi</taxon>
        <taxon>Dikarya</taxon>
        <taxon>Ascomycota</taxon>
        <taxon>Taphrinomycotina</taxon>
        <taxon>Schizosaccharomycetes</taxon>
        <taxon>Schizosaccharomycetales</taxon>
        <taxon>Schizosaccharomycetaceae</taxon>
        <taxon>Schizosaccharomyces</taxon>
    </lineage>
</organism>